<proteinExistence type="inferred from homology"/>
<dbReference type="EMBL" id="CP000703">
    <property type="protein sequence ID" value="ABQ50041.1"/>
    <property type="molecule type" value="Genomic_DNA"/>
</dbReference>
<dbReference type="RefSeq" id="WP_000623881.1">
    <property type="nucleotide sequence ID" value="NC_009487.1"/>
</dbReference>
<dbReference type="SMR" id="A5IV18"/>
<dbReference type="KEGG" id="saj:SaurJH9_2261"/>
<dbReference type="HOGENOM" id="CLU_098841_0_1_9"/>
<dbReference type="GO" id="GO:0022625">
    <property type="term" value="C:cytosolic large ribosomal subunit"/>
    <property type="evidence" value="ECO:0007669"/>
    <property type="project" value="TreeGrafter"/>
</dbReference>
<dbReference type="GO" id="GO:0008097">
    <property type="term" value="F:5S rRNA binding"/>
    <property type="evidence" value="ECO:0007669"/>
    <property type="project" value="TreeGrafter"/>
</dbReference>
<dbReference type="GO" id="GO:0003735">
    <property type="term" value="F:structural constituent of ribosome"/>
    <property type="evidence" value="ECO:0007669"/>
    <property type="project" value="InterPro"/>
</dbReference>
<dbReference type="GO" id="GO:0006412">
    <property type="term" value="P:translation"/>
    <property type="evidence" value="ECO:0007669"/>
    <property type="project" value="UniProtKB-UniRule"/>
</dbReference>
<dbReference type="CDD" id="cd00432">
    <property type="entry name" value="Ribosomal_L18_L5e"/>
    <property type="match status" value="1"/>
</dbReference>
<dbReference type="FunFam" id="3.30.420.100:FF:000001">
    <property type="entry name" value="50S ribosomal protein L18"/>
    <property type="match status" value="1"/>
</dbReference>
<dbReference type="Gene3D" id="3.30.420.100">
    <property type="match status" value="1"/>
</dbReference>
<dbReference type="HAMAP" id="MF_01337_B">
    <property type="entry name" value="Ribosomal_uL18_B"/>
    <property type="match status" value="1"/>
</dbReference>
<dbReference type="InterPro" id="IPR004389">
    <property type="entry name" value="Ribosomal_uL18_bac-type"/>
</dbReference>
<dbReference type="InterPro" id="IPR005484">
    <property type="entry name" value="Ribosomal_uL18_bac/euk"/>
</dbReference>
<dbReference type="NCBIfam" id="TIGR00060">
    <property type="entry name" value="L18_bact"/>
    <property type="match status" value="1"/>
</dbReference>
<dbReference type="PANTHER" id="PTHR12899">
    <property type="entry name" value="39S RIBOSOMAL PROTEIN L18, MITOCHONDRIAL"/>
    <property type="match status" value="1"/>
</dbReference>
<dbReference type="PANTHER" id="PTHR12899:SF3">
    <property type="entry name" value="LARGE RIBOSOMAL SUBUNIT PROTEIN UL18M"/>
    <property type="match status" value="1"/>
</dbReference>
<dbReference type="Pfam" id="PF00861">
    <property type="entry name" value="Ribosomal_L18p"/>
    <property type="match status" value="1"/>
</dbReference>
<dbReference type="SUPFAM" id="SSF53137">
    <property type="entry name" value="Translational machinery components"/>
    <property type="match status" value="1"/>
</dbReference>
<reference key="1">
    <citation type="submission" date="2007-05" db="EMBL/GenBank/DDBJ databases">
        <title>Complete sequence of chromosome of Staphylococcus aureus subsp. aureus JH9.</title>
        <authorList>
            <consortium name="US DOE Joint Genome Institute"/>
            <person name="Copeland A."/>
            <person name="Lucas S."/>
            <person name="Lapidus A."/>
            <person name="Barry K."/>
            <person name="Detter J.C."/>
            <person name="Glavina del Rio T."/>
            <person name="Hammon N."/>
            <person name="Israni S."/>
            <person name="Pitluck S."/>
            <person name="Chain P."/>
            <person name="Malfatti S."/>
            <person name="Shin M."/>
            <person name="Vergez L."/>
            <person name="Schmutz J."/>
            <person name="Larimer F."/>
            <person name="Land M."/>
            <person name="Hauser L."/>
            <person name="Kyrpides N."/>
            <person name="Kim E."/>
            <person name="Tomasz A."/>
            <person name="Richardson P."/>
        </authorList>
    </citation>
    <scope>NUCLEOTIDE SEQUENCE [LARGE SCALE GENOMIC DNA]</scope>
    <source>
        <strain>JH9</strain>
    </source>
</reference>
<name>RL18_STAA9</name>
<accession>A5IV18</accession>
<gene>
    <name evidence="1" type="primary">rplR</name>
    <name type="ordered locus">SaurJH9_2261</name>
</gene>
<keyword id="KW-0687">Ribonucleoprotein</keyword>
<keyword id="KW-0689">Ribosomal protein</keyword>
<keyword id="KW-0694">RNA-binding</keyword>
<keyword id="KW-0699">rRNA-binding</keyword>
<feature type="chain" id="PRO_1000086691" description="Large ribosomal subunit protein uL18">
    <location>
        <begin position="1"/>
        <end position="119"/>
    </location>
</feature>
<organism>
    <name type="scientific">Staphylococcus aureus (strain JH9)</name>
    <dbReference type="NCBI Taxonomy" id="359786"/>
    <lineage>
        <taxon>Bacteria</taxon>
        <taxon>Bacillati</taxon>
        <taxon>Bacillota</taxon>
        <taxon>Bacilli</taxon>
        <taxon>Bacillales</taxon>
        <taxon>Staphylococcaceae</taxon>
        <taxon>Staphylococcus</taxon>
    </lineage>
</organism>
<evidence type="ECO:0000255" key="1">
    <source>
        <dbReference type="HAMAP-Rule" id="MF_01337"/>
    </source>
</evidence>
<evidence type="ECO:0000305" key="2"/>
<sequence length="119" mass="13097">MISKIDKNKVRLKRHARVRTNLSGTAEKPRLNVYRSNKHIYAQIIDDNKGVTLAQASSKDSDIATTATKVELATKVGEAIAKKAADKGIKEIVFDRGGYLYHGRVKALAEAARESGLEF</sequence>
<protein>
    <recommendedName>
        <fullName evidence="1">Large ribosomal subunit protein uL18</fullName>
    </recommendedName>
    <alternativeName>
        <fullName evidence="2">50S ribosomal protein L18</fullName>
    </alternativeName>
</protein>
<comment type="function">
    <text evidence="1">This is one of the proteins that bind and probably mediate the attachment of the 5S RNA into the large ribosomal subunit, where it forms part of the central protuberance.</text>
</comment>
<comment type="subunit">
    <text evidence="1">Part of the 50S ribosomal subunit; part of the 5S rRNA/L5/L18/L25 subcomplex. Contacts the 5S and 23S rRNAs.</text>
</comment>
<comment type="similarity">
    <text evidence="1">Belongs to the universal ribosomal protein uL18 family.</text>
</comment>